<sequence length="80" mass="8735">MATRGWFSESSAQVAQIGDIMFQGHWQWVSNALQATAAAVDNINRNAYPGVSRSGSGEGAFSSSPSNGFRPKRIRSRFNR</sequence>
<name>CSMA_CHLAA</name>
<dbReference type="EMBL" id="M33964">
    <property type="protein sequence ID" value="AAA23099.1"/>
    <property type="molecule type" value="Genomic_DNA"/>
</dbReference>
<dbReference type="EMBL" id="CP000909">
    <property type="protein sequence ID" value="ABY33380.1"/>
    <property type="molecule type" value="Genomic_DNA"/>
</dbReference>
<dbReference type="PIR" id="B37765">
    <property type="entry name" value="B37765"/>
</dbReference>
<dbReference type="RefSeq" id="WP_012256036.1">
    <property type="nucleotide sequence ID" value="NC_010175.1"/>
</dbReference>
<dbReference type="RefSeq" id="YP_001633769.1">
    <property type="nucleotide sequence ID" value="NC_010175.1"/>
</dbReference>
<dbReference type="SMR" id="P09928"/>
<dbReference type="STRING" id="324602.Caur_0126"/>
<dbReference type="EnsemblBacteria" id="ABY33380">
    <property type="protein sequence ID" value="ABY33380"/>
    <property type="gene ID" value="Caur_0126"/>
</dbReference>
<dbReference type="KEGG" id="cau:Caur_0126"/>
<dbReference type="PATRIC" id="fig|324602.8.peg.144"/>
<dbReference type="HOGENOM" id="CLU_196591_0_0_0"/>
<dbReference type="InParanoid" id="P09928"/>
<dbReference type="Proteomes" id="UP000002008">
    <property type="component" value="Chromosome"/>
</dbReference>
<dbReference type="GO" id="GO:0033105">
    <property type="term" value="C:chlorosome envelope"/>
    <property type="evidence" value="ECO:0007669"/>
    <property type="project" value="UniProtKB-SubCell"/>
</dbReference>
<dbReference type="GO" id="GO:0042314">
    <property type="term" value="F:bacteriochlorophyll binding"/>
    <property type="evidence" value="ECO:0007669"/>
    <property type="project" value="UniProtKB-KW"/>
</dbReference>
<dbReference type="GO" id="GO:0046872">
    <property type="term" value="F:metal ion binding"/>
    <property type="evidence" value="ECO:0007669"/>
    <property type="project" value="UniProtKB-KW"/>
</dbReference>
<dbReference type="GO" id="GO:0015979">
    <property type="term" value="P:photosynthesis"/>
    <property type="evidence" value="ECO:0007669"/>
    <property type="project" value="UniProtKB-KW"/>
</dbReference>
<dbReference type="Gene3D" id="1.20.5.950">
    <property type="entry name" value="bacteriochlorophyll c-binding protein"/>
    <property type="match status" value="1"/>
</dbReference>
<dbReference type="InterPro" id="IPR001470">
    <property type="entry name" value="Bchl_c-bd"/>
</dbReference>
<dbReference type="InterPro" id="IPR038387">
    <property type="entry name" value="Bchl_C-bd_sf"/>
</dbReference>
<dbReference type="Pfam" id="PF02043">
    <property type="entry name" value="Bac_chlorC"/>
    <property type="match status" value="1"/>
</dbReference>
<dbReference type="PIRSF" id="PIRSF002903">
    <property type="entry name" value="Bac_chlorC_bd"/>
    <property type="match status" value="1"/>
</dbReference>
<dbReference type="PRINTS" id="PR00656">
    <property type="entry name" value="BCHLROPHYLLC"/>
</dbReference>
<gene>
    <name type="primary">cmsA</name>
    <name type="ordered locus">Caur_0126</name>
</gene>
<reference key="1">
    <citation type="journal article" date="1990" name="J. Bacteriol.">
        <title>Gene encoding the 5.7-kilodalton chlorosome protein of Chloroflexus aurantiacus: regulated message levels and a predicted carboxy-terminal protein extension.</title>
        <authorList>
            <person name="Theroux S.J."/>
            <person name="Redlinger T.E."/>
            <person name="Fuller R.C."/>
            <person name="Robinson S.J."/>
        </authorList>
    </citation>
    <scope>NUCLEOTIDE SEQUENCE [GENOMIC DNA]</scope>
</reference>
<reference key="2">
    <citation type="journal article" date="2011" name="BMC Genomics">
        <title>Complete genome sequence of the filamentous anoxygenic phototrophic bacterium Chloroflexus aurantiacus.</title>
        <authorList>
            <person name="Tang K.H."/>
            <person name="Barry K."/>
            <person name="Chertkov O."/>
            <person name="Dalin E."/>
            <person name="Han C.S."/>
            <person name="Hauser L.J."/>
            <person name="Honchak B.M."/>
            <person name="Karbach L.E."/>
            <person name="Land M.L."/>
            <person name="Lapidus A."/>
            <person name="Larimer F.W."/>
            <person name="Mikhailova N."/>
            <person name="Pitluck S."/>
            <person name="Pierson B.K."/>
            <person name="Blankenship R.E."/>
        </authorList>
    </citation>
    <scope>NUCLEOTIDE SEQUENCE [LARGE SCALE GENOMIC DNA]</scope>
    <source>
        <strain>ATCC 29366 / DSM 635 / J-10-fl</strain>
    </source>
</reference>
<reference key="3">
    <citation type="journal article" date="1985" name="FEBS Lett.">
        <title>The complete amino acid sequence of the bacteriochlorophyll c binding polypeptide from chlorosomes of the green photosynthetic bacterium Chloroflexus aurantiacus.</title>
        <authorList>
            <person name="Wechsler T."/>
            <person name="Suter F."/>
            <person name="Fuller R.C."/>
            <person name="Zuber H."/>
        </authorList>
    </citation>
    <scope>PROTEIN SEQUENCE OF 2-53</scope>
</reference>
<protein>
    <recommendedName>
        <fullName>Bacteriochlorophyll c-binding protein</fullName>
        <shortName>BChl c-binding</shortName>
    </recommendedName>
    <alternativeName>
        <fullName>5.7 kDa chlorosomal protein</fullName>
    </alternativeName>
    <alternativeName>
        <fullName>Chlorosome protein A</fullName>
    </alternativeName>
    <alternativeName>
        <fullName>Light-harvesting protein B-740</fullName>
    </alternativeName>
</protein>
<keyword id="KW-0076">Bacteriochlorophyll</keyword>
<keyword id="KW-0148">Chlorophyll</keyword>
<keyword id="KW-0151">Chlorosome</keyword>
<keyword id="KW-0157">Chromophore</keyword>
<keyword id="KW-0903">Direct protein sequencing</keyword>
<keyword id="KW-0249">Electron transport</keyword>
<keyword id="KW-0460">Magnesium</keyword>
<keyword id="KW-0479">Metal-binding</keyword>
<keyword id="KW-0602">Photosynthesis</keyword>
<keyword id="KW-1185">Reference proteome</keyword>
<keyword id="KW-0813">Transport</keyword>
<evidence type="ECO:0000256" key="1">
    <source>
        <dbReference type="SAM" id="MobiDB-lite"/>
    </source>
</evidence>
<evidence type="ECO:0000269" key="2">
    <source ref="3"/>
</evidence>
<evidence type="ECO:0000305" key="3"/>
<proteinExistence type="evidence at protein level"/>
<organism>
    <name type="scientific">Chloroflexus aurantiacus (strain ATCC 29366 / DSM 635 / J-10-fl)</name>
    <dbReference type="NCBI Taxonomy" id="324602"/>
    <lineage>
        <taxon>Bacteria</taxon>
        <taxon>Bacillati</taxon>
        <taxon>Chloroflexota</taxon>
        <taxon>Chloroflexia</taxon>
        <taxon>Chloroflexales</taxon>
        <taxon>Chloroflexineae</taxon>
        <taxon>Chloroflexaceae</taxon>
        <taxon>Chloroflexus</taxon>
    </lineage>
</organism>
<comment type="function">
    <text>Component of the photosynthetic apparatus. The light harvesting B740 complex binds bacteriochlorophyll c.</text>
</comment>
<comment type="subcellular location">
    <subcellularLocation>
        <location>Chlorosome</location>
        <location>Chlorosome envelope</location>
    </subcellularLocation>
</comment>
<comment type="domain">
    <text>The C-terminal extension may have a role in proper incorporation of the BChl c binding protein during chlorosome assembly.</text>
</comment>
<comment type="similarity">
    <text evidence="3">Belongs to the BChl C/E-binding protein family.</text>
</comment>
<accession>P09928</accession>
<accession>A9WBH3</accession>
<accession>P19266</accession>
<feature type="initiator methionine" description="Removed" evidence="2">
    <location>
        <position position="1"/>
    </location>
</feature>
<feature type="chain" id="PRO_0000002805" description="Bacteriochlorophyll c-binding protein">
    <location>
        <begin position="2"/>
        <end position="53"/>
    </location>
</feature>
<feature type="propeptide" id="PRO_0000002806">
    <location>
        <begin position="54"/>
        <end position="80"/>
    </location>
</feature>
<feature type="region of interest" description="Disordered" evidence="1">
    <location>
        <begin position="49"/>
        <end position="80"/>
    </location>
</feature>
<feature type="compositionally biased region" description="Basic residues" evidence="1">
    <location>
        <begin position="70"/>
        <end position="80"/>
    </location>
</feature>
<feature type="binding site" description="axial binding residue" evidence="3">
    <location>
        <position position="25"/>
    </location>
    <ligand>
        <name>a bacteriochlorophyll c</name>
        <dbReference type="ChEBI" id="CHEBI:60197"/>
    </ligand>
    <ligandPart>
        <name>Mg</name>
        <dbReference type="ChEBI" id="CHEBI:25107"/>
    </ligandPart>
</feature>
<feature type="sequence conflict" description="In Ref. 3; AA sequence." evidence="3" ref="3">
    <location>
        <position position="52"/>
    </location>
</feature>